<organism>
    <name type="scientific">Staphylococcus aureus (strain COL)</name>
    <dbReference type="NCBI Taxonomy" id="93062"/>
    <lineage>
        <taxon>Bacteria</taxon>
        <taxon>Bacillati</taxon>
        <taxon>Bacillota</taxon>
        <taxon>Bacilli</taxon>
        <taxon>Bacillales</taxon>
        <taxon>Staphylococcaceae</taxon>
        <taxon>Staphylococcus</taxon>
    </lineage>
</organism>
<name>RPOA_STAAC</name>
<comment type="function">
    <text evidence="1">DNA-dependent RNA polymerase catalyzes the transcription of DNA into RNA using the four ribonucleoside triphosphates as substrates.</text>
</comment>
<comment type="catalytic activity">
    <reaction evidence="1">
        <text>RNA(n) + a ribonucleoside 5'-triphosphate = RNA(n+1) + diphosphate</text>
        <dbReference type="Rhea" id="RHEA:21248"/>
        <dbReference type="Rhea" id="RHEA-COMP:14527"/>
        <dbReference type="Rhea" id="RHEA-COMP:17342"/>
        <dbReference type="ChEBI" id="CHEBI:33019"/>
        <dbReference type="ChEBI" id="CHEBI:61557"/>
        <dbReference type="ChEBI" id="CHEBI:140395"/>
        <dbReference type="EC" id="2.7.7.6"/>
    </reaction>
</comment>
<comment type="subunit">
    <text evidence="1">Homodimer. The RNAP catalytic core consists of 2 alpha, 1 beta, 1 beta' and 1 omega subunit. When a sigma factor is associated with the core the holoenzyme is formed, which can initiate transcription.</text>
</comment>
<comment type="domain">
    <text evidence="1">The N-terminal domain is essential for RNAP assembly and basal transcription, whereas the C-terminal domain is involved in interaction with transcriptional regulators and with upstream promoter elements.</text>
</comment>
<comment type="similarity">
    <text evidence="1">Belongs to the RNA polymerase alpha chain family.</text>
</comment>
<proteinExistence type="inferred from homology"/>
<dbReference type="EC" id="2.7.7.6" evidence="1"/>
<dbReference type="EMBL" id="CP000046">
    <property type="protein sequence ID" value="AAW37088.1"/>
    <property type="molecule type" value="Genomic_DNA"/>
</dbReference>
<dbReference type="RefSeq" id="WP_000569649.1">
    <property type="nucleotide sequence ID" value="NZ_JBGOFO010000004.1"/>
</dbReference>
<dbReference type="SMR" id="Q5HDY4"/>
<dbReference type="KEGG" id="sac:SACOL2213"/>
<dbReference type="HOGENOM" id="CLU_053084_0_1_9"/>
<dbReference type="Proteomes" id="UP000000530">
    <property type="component" value="Chromosome"/>
</dbReference>
<dbReference type="GO" id="GO:0005737">
    <property type="term" value="C:cytoplasm"/>
    <property type="evidence" value="ECO:0007669"/>
    <property type="project" value="UniProtKB-ARBA"/>
</dbReference>
<dbReference type="GO" id="GO:0000428">
    <property type="term" value="C:DNA-directed RNA polymerase complex"/>
    <property type="evidence" value="ECO:0007669"/>
    <property type="project" value="UniProtKB-KW"/>
</dbReference>
<dbReference type="GO" id="GO:0003677">
    <property type="term" value="F:DNA binding"/>
    <property type="evidence" value="ECO:0007669"/>
    <property type="project" value="UniProtKB-UniRule"/>
</dbReference>
<dbReference type="GO" id="GO:0003899">
    <property type="term" value="F:DNA-directed RNA polymerase activity"/>
    <property type="evidence" value="ECO:0007669"/>
    <property type="project" value="UniProtKB-UniRule"/>
</dbReference>
<dbReference type="GO" id="GO:0046983">
    <property type="term" value="F:protein dimerization activity"/>
    <property type="evidence" value="ECO:0007669"/>
    <property type="project" value="InterPro"/>
</dbReference>
<dbReference type="GO" id="GO:0006351">
    <property type="term" value="P:DNA-templated transcription"/>
    <property type="evidence" value="ECO:0007669"/>
    <property type="project" value="UniProtKB-UniRule"/>
</dbReference>
<dbReference type="CDD" id="cd06928">
    <property type="entry name" value="RNAP_alpha_NTD"/>
    <property type="match status" value="1"/>
</dbReference>
<dbReference type="FunFam" id="1.10.150.20:FF:000001">
    <property type="entry name" value="DNA-directed RNA polymerase subunit alpha"/>
    <property type="match status" value="1"/>
</dbReference>
<dbReference type="FunFam" id="2.170.120.12:FF:000001">
    <property type="entry name" value="DNA-directed RNA polymerase subunit alpha"/>
    <property type="match status" value="1"/>
</dbReference>
<dbReference type="Gene3D" id="1.10.150.20">
    <property type="entry name" value="5' to 3' exonuclease, C-terminal subdomain"/>
    <property type="match status" value="1"/>
</dbReference>
<dbReference type="Gene3D" id="2.170.120.12">
    <property type="entry name" value="DNA-directed RNA polymerase, insert domain"/>
    <property type="match status" value="1"/>
</dbReference>
<dbReference type="Gene3D" id="3.30.1360.10">
    <property type="entry name" value="RNA polymerase, RBP11-like subunit"/>
    <property type="match status" value="1"/>
</dbReference>
<dbReference type="HAMAP" id="MF_00059">
    <property type="entry name" value="RNApol_bact_RpoA"/>
    <property type="match status" value="1"/>
</dbReference>
<dbReference type="InterPro" id="IPR011262">
    <property type="entry name" value="DNA-dir_RNA_pol_insert"/>
</dbReference>
<dbReference type="InterPro" id="IPR011263">
    <property type="entry name" value="DNA-dir_RNA_pol_RpoA/D/Rpb3"/>
</dbReference>
<dbReference type="InterPro" id="IPR011773">
    <property type="entry name" value="DNA-dir_RpoA"/>
</dbReference>
<dbReference type="InterPro" id="IPR036603">
    <property type="entry name" value="RBP11-like"/>
</dbReference>
<dbReference type="InterPro" id="IPR011260">
    <property type="entry name" value="RNAP_asu_C"/>
</dbReference>
<dbReference type="InterPro" id="IPR036643">
    <property type="entry name" value="RNApol_insert_sf"/>
</dbReference>
<dbReference type="NCBIfam" id="NF003513">
    <property type="entry name" value="PRK05182.1-2"/>
    <property type="match status" value="1"/>
</dbReference>
<dbReference type="NCBIfam" id="NF003515">
    <property type="entry name" value="PRK05182.2-1"/>
    <property type="match status" value="1"/>
</dbReference>
<dbReference type="NCBIfam" id="NF003519">
    <property type="entry name" value="PRK05182.2-5"/>
    <property type="match status" value="1"/>
</dbReference>
<dbReference type="NCBIfam" id="TIGR02027">
    <property type="entry name" value="rpoA"/>
    <property type="match status" value="1"/>
</dbReference>
<dbReference type="Pfam" id="PF01000">
    <property type="entry name" value="RNA_pol_A_bac"/>
    <property type="match status" value="1"/>
</dbReference>
<dbReference type="Pfam" id="PF03118">
    <property type="entry name" value="RNA_pol_A_CTD"/>
    <property type="match status" value="1"/>
</dbReference>
<dbReference type="Pfam" id="PF01193">
    <property type="entry name" value="RNA_pol_L"/>
    <property type="match status" value="1"/>
</dbReference>
<dbReference type="SMART" id="SM00662">
    <property type="entry name" value="RPOLD"/>
    <property type="match status" value="1"/>
</dbReference>
<dbReference type="SUPFAM" id="SSF47789">
    <property type="entry name" value="C-terminal domain of RNA polymerase alpha subunit"/>
    <property type="match status" value="1"/>
</dbReference>
<dbReference type="SUPFAM" id="SSF56553">
    <property type="entry name" value="Insert subdomain of RNA polymerase alpha subunit"/>
    <property type="match status" value="1"/>
</dbReference>
<dbReference type="SUPFAM" id="SSF55257">
    <property type="entry name" value="RBP11-like subunits of RNA polymerase"/>
    <property type="match status" value="1"/>
</dbReference>
<protein>
    <recommendedName>
        <fullName evidence="1">DNA-directed RNA polymerase subunit alpha</fullName>
        <shortName evidence="1">RNAP subunit alpha</shortName>
        <ecNumber evidence="1">2.7.7.6</ecNumber>
    </recommendedName>
    <alternativeName>
        <fullName evidence="1">RNA polymerase subunit alpha</fullName>
    </alternativeName>
    <alternativeName>
        <fullName evidence="1">Transcriptase subunit alpha</fullName>
    </alternativeName>
</protein>
<sequence length="314" mass="35012">MIEIEKPRIETIEISEDAKFGKFVVEPLERGYGTTLGNSLRRILLSSLPGAAVKYIEIEGVLHEFSAVDNVVEDVSTIIMNIKQLALKIYSEEDKTLEIDVRDEGEVTASDITHDSDVEILNPELKIATVSKGGHLKIRLVANKGRGYALAEQNNTSDLPIGVIPVDSLYSPVERVNYTVENTRVGQSSDFDKLTLDVWTNGSITPQESVSLAAKIMTEHLNIFVGLTDEAQNAEIMIEKEEDQKEKVLEMSIEELDLSVRSYNCLKRAGINSVQELADKSEADMMKVRNLGRKSLEEVKYKLEDLGLGLRKED</sequence>
<feature type="chain" id="PRO_0000175379" description="DNA-directed RNA polymerase subunit alpha">
    <location>
        <begin position="1"/>
        <end position="314"/>
    </location>
</feature>
<feature type="region of interest" description="Alpha N-terminal domain (alpha-NTD)" evidence="1">
    <location>
        <begin position="1"/>
        <end position="228"/>
    </location>
</feature>
<feature type="region of interest" description="Alpha C-terminal domain (alpha-CTD)" evidence="1">
    <location>
        <begin position="245"/>
        <end position="314"/>
    </location>
</feature>
<evidence type="ECO:0000255" key="1">
    <source>
        <dbReference type="HAMAP-Rule" id="MF_00059"/>
    </source>
</evidence>
<accession>Q5HDY4</accession>
<reference key="1">
    <citation type="journal article" date="2005" name="J. Bacteriol.">
        <title>Insights on evolution of virulence and resistance from the complete genome analysis of an early methicillin-resistant Staphylococcus aureus strain and a biofilm-producing methicillin-resistant Staphylococcus epidermidis strain.</title>
        <authorList>
            <person name="Gill S.R."/>
            <person name="Fouts D.E."/>
            <person name="Archer G.L."/>
            <person name="Mongodin E.F."/>
            <person name="DeBoy R.T."/>
            <person name="Ravel J."/>
            <person name="Paulsen I.T."/>
            <person name="Kolonay J.F."/>
            <person name="Brinkac L.M."/>
            <person name="Beanan M.J."/>
            <person name="Dodson R.J."/>
            <person name="Daugherty S.C."/>
            <person name="Madupu R."/>
            <person name="Angiuoli S.V."/>
            <person name="Durkin A.S."/>
            <person name="Haft D.H."/>
            <person name="Vamathevan J.J."/>
            <person name="Khouri H."/>
            <person name="Utterback T.R."/>
            <person name="Lee C."/>
            <person name="Dimitrov G."/>
            <person name="Jiang L."/>
            <person name="Qin H."/>
            <person name="Weidman J."/>
            <person name="Tran K."/>
            <person name="Kang K.H."/>
            <person name="Hance I.R."/>
            <person name="Nelson K.E."/>
            <person name="Fraser C.M."/>
        </authorList>
    </citation>
    <scope>NUCLEOTIDE SEQUENCE [LARGE SCALE GENOMIC DNA]</scope>
    <source>
        <strain>COL</strain>
    </source>
</reference>
<keyword id="KW-0240">DNA-directed RNA polymerase</keyword>
<keyword id="KW-0548">Nucleotidyltransferase</keyword>
<keyword id="KW-0804">Transcription</keyword>
<keyword id="KW-0808">Transferase</keyword>
<gene>
    <name evidence="1" type="primary">rpoA</name>
    <name type="ordered locus">SACOL2213</name>
</gene>